<feature type="propeptide" id="PRO_0000459225" description="Propeptide" evidence="1">
    <location>
        <begin position="1"/>
        <end position="18"/>
    </location>
</feature>
<feature type="chain" id="PRO_0000157963" description="Flagellin FlaB2">
    <location>
        <begin position="19"/>
        <end position="305"/>
    </location>
</feature>
<comment type="function">
    <text evidence="5">Flagellin is the subunit protein which polymerizes to form the filaments of archaeal flagella.</text>
</comment>
<comment type="subcellular location">
    <subcellularLocation>
        <location evidence="1">Archaeal flagellum</location>
    </subcellularLocation>
</comment>
<comment type="PTM">
    <text evidence="1">Glycosylated.</text>
</comment>
<comment type="miscellaneous">
    <text evidence="1">Flagellar filament preparations contain two major bands with molecular weights of 31 and 33 kDa and several minor higher molecular weight bands; both major bands have an identical N-terminal sequence.</text>
</comment>
<comment type="similarity">
    <text evidence="4">Belongs to the archaeal flagellin family.</text>
</comment>
<sequence>MGLQKIVKKYNKKMKRKGLAGLDTAIILIAFIITASVLAYVAINMGLFVTQKAKSTINKGEETASTALTLSGSVLYAVNYPSNTRSYWIYFTVSPSSGVSSVELSPTTTAISFTASTEGVAYSNIYKYTLLTVDPSSLGHAVYANGQYLNLINQQTSAGQTYVYYPNPYYALLALNYTLYNYYLSTKTPSPIFINSSTLSSIPQWLKNDNSFTFTLNISGQLVTYDVFVNQTFAFTYPVAGDPLIGSAIAPAGSVIGVMILFGPDLGSHVFQYQTVTIQITPNVGSPLTISEYIYQPEGSVSVIG</sequence>
<dbReference type="EMBL" id="CP077717">
    <property type="protein sequence ID" value="QXJ28250.1"/>
    <property type="molecule type" value="Genomic_DNA"/>
</dbReference>
<dbReference type="RefSeq" id="WP_218267241.1">
    <property type="nucleotide sequence ID" value="NZ_CP077717.1"/>
</dbReference>
<dbReference type="SMR" id="Q9UWG6"/>
<dbReference type="GeneID" id="65562707"/>
<dbReference type="KEGG" id="sshi:J5U23_01118"/>
<dbReference type="OrthoDB" id="36996at2157"/>
<dbReference type="Proteomes" id="UP000694018">
    <property type="component" value="Chromosome"/>
</dbReference>
<dbReference type="GO" id="GO:0097589">
    <property type="term" value="C:archaeal-type flagellum"/>
    <property type="evidence" value="ECO:0007669"/>
    <property type="project" value="UniProtKB-SubCell"/>
</dbReference>
<dbReference type="GO" id="GO:0005198">
    <property type="term" value="F:structural molecule activity"/>
    <property type="evidence" value="ECO:0007669"/>
    <property type="project" value="InterPro"/>
</dbReference>
<dbReference type="GO" id="GO:0097588">
    <property type="term" value="P:archaeal or bacterial-type flagellum-dependent cell motility"/>
    <property type="evidence" value="ECO:0007669"/>
    <property type="project" value="InterPro"/>
</dbReference>
<dbReference type="InterPro" id="IPR013373">
    <property type="entry name" value="Flagellin/pilin_N_arc"/>
</dbReference>
<dbReference type="InterPro" id="IPR002774">
    <property type="entry name" value="Flagellin_arc"/>
</dbReference>
<dbReference type="NCBIfam" id="TIGR02537">
    <property type="entry name" value="arch_flag_Nterm"/>
    <property type="match status" value="1"/>
</dbReference>
<dbReference type="PANTHER" id="PTHR35903">
    <property type="entry name" value="FLAGELLIN B1"/>
    <property type="match status" value="1"/>
</dbReference>
<dbReference type="PANTHER" id="PTHR35903:SF1">
    <property type="entry name" value="FLAGELLIN B1"/>
    <property type="match status" value="1"/>
</dbReference>
<dbReference type="Pfam" id="PF01917">
    <property type="entry name" value="Arch_flagellin"/>
    <property type="match status" value="1"/>
</dbReference>
<protein>
    <recommendedName>
        <fullName evidence="2">Flagellin FlaB2</fullName>
    </recommendedName>
    <alternativeName>
        <fullName evidence="3">31/33 kDa flagellin</fullName>
    </alternativeName>
</protein>
<name>FLA1_SACSH</name>
<evidence type="ECO:0000269" key="1">
    <source>
    </source>
</evidence>
<evidence type="ECO:0000303" key="2">
    <source>
    </source>
</evidence>
<evidence type="ECO:0000303" key="3">
    <source>
    </source>
</evidence>
<evidence type="ECO:0000305" key="4"/>
<evidence type="ECO:0000305" key="5">
    <source>
    </source>
</evidence>
<evidence type="ECO:0000312" key="6">
    <source>
        <dbReference type="EMBL" id="QXJ28250.1"/>
    </source>
</evidence>
<accession>Q9UWG6</accession>
<accession>A0A8F5BMX8</accession>
<organism>
    <name type="scientific">Saccharolobus shibatae (strain ATCC 51178 / DSM 5389 / JCM 8931 / NBRC 15437 / B12)</name>
    <name type="common">Sulfolobus shibatae</name>
    <dbReference type="NCBI Taxonomy" id="523848"/>
    <lineage>
        <taxon>Archaea</taxon>
        <taxon>Thermoproteota</taxon>
        <taxon>Thermoprotei</taxon>
        <taxon>Sulfolobales</taxon>
        <taxon>Sulfolobaceae</taxon>
        <taxon>Saccharolobus</taxon>
    </lineage>
</organism>
<keyword id="KW-0974">Archaeal flagellum</keyword>
<keyword id="KW-0903">Direct protein sequencing</keyword>
<keyword id="KW-0325">Glycoprotein</keyword>
<gene>
    <name evidence="2" type="primary">flaB2</name>
    <name evidence="6" type="ORF">J5U23_01118</name>
</gene>
<proteinExistence type="evidence at protein level"/>
<reference evidence="6" key="1">
    <citation type="journal article" date="2021" name="Environ. Microbiol.">
        <title>New insights into the diversity and evolution of the archaeal mobilome from three complete genomes of Saccharolobus shibatae.</title>
        <authorList>
            <person name="Medvedeva S."/>
            <person name="Brandt D."/>
            <person name="Cvirkaite-Krupovic V."/>
            <person name="Liu Y."/>
            <person name="Severinov K."/>
            <person name="Ishino S."/>
            <person name="Ishino Y."/>
            <person name="Prangishvili D."/>
            <person name="Kalinowski J."/>
            <person name="Krupovic M."/>
        </authorList>
    </citation>
    <scope>NUCLEOTIDE SEQUENCE [LARGE SCALE GENOMIC DNA]</scope>
    <source>
        <strain>ATCC 51178 / DSM 5389 / JCM 8931 / NBRC 15437 / B12</strain>
    </source>
</reference>
<reference key="2">
    <citation type="journal article" date="1996" name="J. Bacteriol.">
        <title>Isolation and characterization of flagella and flagellin proteins from the Thermoacidophilic archaea Thermoplasma volcanium and Sulfolobus shibatae.</title>
        <authorList>
            <person name="Faguy D.M."/>
            <person name="Bayley D.P."/>
            <person name="Kostyukova A.S."/>
            <person name="Thomas N.A."/>
            <person name="Jarrell K.F."/>
        </authorList>
    </citation>
    <scope>PROTEIN SEQUENCE OF 19-41</scope>
    <scope>FUNCTION</scope>
    <scope>SUBCELLULAR LOCATION</scope>
    <scope>GLYCOSYLATION</scope>
    <source>
        <strain>ATCC 51178 / DSM 5389 / JCM 8931 / NBRC 15437 / B12</strain>
    </source>
</reference>